<sequence length="346" mass="38834">MESTLSAGIMMAEALQNQLPGLENMWLWVTFLADPKNLFQFYFPAVYYASRRLGISLFWIAFITEWLNLVFKWFLFGDRPFWWVHESGYSAQTPVQIHQFPSSCETGPGSPSGHCMITGAALWPVMIAISSQVASQTRSPWVRVIPGLAYCTFLLAVGLSRVFLLAHFPHQVLAGLLAGVILGWLLSPRVPMERELSFYGLTALTLMLGASLMYWTLFTLGLDLSWSINLASKWCDRPEWVLVDSRPFASLSRDSGSALGLGIALHTPCYAQIRRVHLGNGQKIACFVLAMGLLVFLEWLGHPPQISLFYIFNFLKFTLWPCLVVALVPWMVHTLSAQEAPPIRSS</sequence>
<organism>
    <name type="scientific">Rattus norvegicus</name>
    <name type="common">Rat</name>
    <dbReference type="NCBI Taxonomy" id="10116"/>
    <lineage>
        <taxon>Eukaryota</taxon>
        <taxon>Metazoa</taxon>
        <taxon>Chordata</taxon>
        <taxon>Craniata</taxon>
        <taxon>Vertebrata</taxon>
        <taxon>Euteleostomi</taxon>
        <taxon>Mammalia</taxon>
        <taxon>Eutheria</taxon>
        <taxon>Euarchontoglires</taxon>
        <taxon>Glires</taxon>
        <taxon>Rodentia</taxon>
        <taxon>Myomorpha</taxon>
        <taxon>Muroidea</taxon>
        <taxon>Muridae</taxon>
        <taxon>Murinae</taxon>
        <taxon>Rattus</taxon>
    </lineage>
</organism>
<keyword id="KW-0256">Endoplasmic reticulum</keyword>
<keyword id="KW-0312">Gluconeogenesis</keyword>
<keyword id="KW-0378">Hydrolase</keyword>
<keyword id="KW-0472">Membrane</keyword>
<keyword id="KW-1185">Reference proteome</keyword>
<keyword id="KW-0812">Transmembrane</keyword>
<keyword id="KW-1133">Transmembrane helix</keyword>
<evidence type="ECO:0000250" key="1"/>
<evidence type="ECO:0000255" key="2"/>
<evidence type="ECO:0000269" key="3">
    <source>
    </source>
</evidence>
<evidence type="ECO:0000305" key="4"/>
<feature type="chain" id="PRO_0000334514" description="Glucose-6-phosphatase 3">
    <location>
        <begin position="1"/>
        <end position="346"/>
    </location>
</feature>
<feature type="topological domain" description="Lumenal" evidence="2">
    <location>
        <begin position="1"/>
        <end position="25"/>
    </location>
</feature>
<feature type="transmembrane region" description="Helical" evidence="2">
    <location>
        <begin position="26"/>
        <end position="46"/>
    </location>
</feature>
<feature type="topological domain" description="Cytoplasmic" evidence="2">
    <location>
        <begin position="47"/>
        <end position="56"/>
    </location>
</feature>
<feature type="transmembrane region" description="Helical" evidence="2">
    <location>
        <begin position="57"/>
        <end position="77"/>
    </location>
</feature>
<feature type="topological domain" description="Lumenal" evidence="2">
    <location>
        <begin position="78"/>
        <end position="115"/>
    </location>
</feature>
<feature type="transmembrane region" description="Helical" evidence="2">
    <location>
        <begin position="116"/>
        <end position="135"/>
    </location>
</feature>
<feature type="topological domain" description="Cytoplasmic" evidence="2">
    <location>
        <begin position="136"/>
        <end position="140"/>
    </location>
</feature>
<feature type="transmembrane region" description="Helical" evidence="2">
    <location>
        <begin position="141"/>
        <end position="162"/>
    </location>
</feature>
<feature type="topological domain" description="Lumenal" evidence="2">
    <location>
        <begin position="163"/>
        <end position="167"/>
    </location>
</feature>
<feature type="transmembrane region" description="Helical" evidence="2">
    <location>
        <begin position="168"/>
        <end position="186"/>
    </location>
</feature>
<feature type="topological domain" description="Cytoplasmic" evidence="2">
    <location>
        <begin position="187"/>
        <end position="197"/>
    </location>
</feature>
<feature type="transmembrane region" description="Helical" evidence="2">
    <location>
        <begin position="198"/>
        <end position="218"/>
    </location>
</feature>
<feature type="topological domain" description="Lumenal" evidence="2">
    <location>
        <begin position="219"/>
        <end position="254"/>
    </location>
</feature>
<feature type="transmembrane region" description="Helical" evidence="2">
    <location>
        <begin position="255"/>
        <end position="273"/>
    </location>
</feature>
<feature type="topological domain" description="Cytoplasmic" evidence="2">
    <location>
        <begin position="274"/>
        <end position="283"/>
    </location>
</feature>
<feature type="transmembrane region" description="Helical" evidence="2">
    <location>
        <begin position="284"/>
        <end position="304"/>
    </location>
</feature>
<feature type="topological domain" description="Lumenal" evidence="2">
    <location>
        <begin position="305"/>
        <end position="307"/>
    </location>
</feature>
<feature type="transmembrane region" description="Helical" evidence="2">
    <location>
        <begin position="308"/>
        <end position="328"/>
    </location>
</feature>
<feature type="topological domain" description="Cytoplasmic" evidence="2">
    <location>
        <begin position="329"/>
        <end position="346"/>
    </location>
</feature>
<feature type="active site" description="Proton donor" evidence="2">
    <location>
        <position position="114"/>
    </location>
</feature>
<feature type="active site" description="Nucleophile" evidence="1">
    <location>
        <position position="167"/>
    </location>
</feature>
<feature type="binding site" evidence="2">
    <location>
        <position position="79"/>
    </location>
    <ligand>
        <name>substrate</name>
    </ligand>
</feature>
<feature type="binding site" evidence="2">
    <location>
        <position position="161"/>
    </location>
    <ligand>
        <name>substrate</name>
    </ligand>
</feature>
<feature type="sequence conflict" description="In Ref. 1; AAO39165." evidence="4" ref="1">
    <original>T</original>
    <variation>I</variation>
    <location>
        <position position="106"/>
    </location>
</feature>
<comment type="function">
    <text evidence="1">Hydrolyzes glucose-6-phosphate to glucose in the endoplasmic reticulum. May form with the glucose-6-phosphate transporter (SLC37A4/G6PT) a ubiquitously expressed complex responsible for glucose production through glycogenolysis and gluconeogenesis. Probably required for normal neutrophil function (By similarity).</text>
</comment>
<comment type="catalytic activity">
    <reaction>
        <text>D-glucose 6-phosphate + H2O = D-glucose + phosphate</text>
        <dbReference type="Rhea" id="RHEA:16689"/>
        <dbReference type="ChEBI" id="CHEBI:4167"/>
        <dbReference type="ChEBI" id="CHEBI:15377"/>
        <dbReference type="ChEBI" id="CHEBI:43474"/>
        <dbReference type="ChEBI" id="CHEBI:61548"/>
        <dbReference type="EC" id="3.1.3.9"/>
    </reaction>
</comment>
<comment type="activity regulation">
    <text evidence="1">Inhibited by vanadate.</text>
</comment>
<comment type="pathway">
    <text>Carbohydrate biosynthesis; gluconeogenesis.</text>
</comment>
<comment type="subcellular location">
    <subcellularLocation>
        <location evidence="1">Endoplasmic reticulum membrane</location>
        <topology evidence="1">Multi-pass membrane protein</topology>
    </subcellularLocation>
</comment>
<comment type="tissue specificity">
    <text evidence="3">Expressed in liver and kidney. It is the major glucose-6-phosphatase expressed in the small intestine.</text>
</comment>
<comment type="induction">
    <text evidence="3">Up-regulated upon fasting.</text>
</comment>
<comment type="similarity">
    <text evidence="4">Belongs to the glucose-6-phosphatase family.</text>
</comment>
<reference key="1">
    <citation type="submission" date="2002-11" db="EMBL/GenBank/DDBJ databases">
        <title>Cloning of a glucose-6-phosphatase catalytic subunit-related sequence expressed in rodent tissues.</title>
        <authorList>
            <person name="Middleditch C."/>
            <person name="Darakhshan F."/>
            <person name="Guionie O."/>
            <person name="Bonnefont J."/>
            <person name="Burchell A."/>
            <person name="Clottes E."/>
        </authorList>
    </citation>
    <scope>NUCLEOTIDE SEQUENCE [MRNA]</scope>
    <source>
        <strain>Sprague-Dawley</strain>
        <tissue>Brain</tissue>
    </source>
</reference>
<reference key="2">
    <citation type="journal article" date="2004" name="Genome Res.">
        <title>The status, quality, and expansion of the NIH full-length cDNA project: the Mammalian Gene Collection (MGC).</title>
        <authorList>
            <consortium name="The MGC Project Team"/>
        </authorList>
    </citation>
    <scope>NUCLEOTIDE SEQUENCE [LARGE SCALE MRNA]</scope>
    <source>
        <tissue>Testis</tissue>
    </source>
</reference>
<reference key="3">
    <citation type="journal article" date="2007" name="Am. J. Physiol.">
        <title>Liver glyconeogenesis: a pathway to cope with postprandial amino acid excess in high-protein fed rats?</title>
        <authorList>
            <person name="Azzout-Marniche D."/>
            <person name="Gaudichon C."/>
            <person name="Blouet C."/>
            <person name="Bos C."/>
            <person name="Mathe V."/>
            <person name="Huneau J.-F."/>
            <person name="Tome D."/>
        </authorList>
    </citation>
    <scope>TISSUE SPECIFICITY</scope>
    <scope>INDUCTION</scope>
</reference>
<proteinExistence type="evidence at transcript level"/>
<gene>
    <name type="primary">G6pc3</name>
</gene>
<name>G6PC3_RAT</name>
<dbReference type="EC" id="3.1.3.9"/>
<dbReference type="EMBL" id="AY186240">
    <property type="protein sequence ID" value="AAO39165.1"/>
    <property type="molecule type" value="mRNA"/>
</dbReference>
<dbReference type="EMBL" id="BC078689">
    <property type="protein sequence ID" value="AAH78689.1"/>
    <property type="molecule type" value="mRNA"/>
</dbReference>
<dbReference type="RefSeq" id="NP_788266.2">
    <property type="nucleotide sequence ID" value="NM_176077.3"/>
</dbReference>
<dbReference type="SMR" id="Q6AZ83"/>
<dbReference type="FunCoup" id="Q6AZ83">
    <property type="interactions" value="1245"/>
</dbReference>
<dbReference type="STRING" id="10116.ENSRNOP00000028375"/>
<dbReference type="PhosphoSitePlus" id="Q6AZ83"/>
<dbReference type="PaxDb" id="10116-ENSRNOP00000028375"/>
<dbReference type="Ensembl" id="ENSRNOT00000108412.1">
    <property type="protein sequence ID" value="ENSRNOP00000080695.1"/>
    <property type="gene ID" value="ENSRNOG00000020902.6"/>
</dbReference>
<dbReference type="GeneID" id="303565"/>
<dbReference type="KEGG" id="rno:303565"/>
<dbReference type="UCSC" id="RGD:727875">
    <property type="organism name" value="rat"/>
</dbReference>
<dbReference type="AGR" id="RGD:727875"/>
<dbReference type="CTD" id="92579"/>
<dbReference type="RGD" id="727875">
    <property type="gene designation" value="G6pc3"/>
</dbReference>
<dbReference type="eggNOG" id="ENOG502QS5D">
    <property type="taxonomic scope" value="Eukaryota"/>
</dbReference>
<dbReference type="GeneTree" id="ENSGT00950000183150"/>
<dbReference type="HOGENOM" id="CLU_052517_0_0_1"/>
<dbReference type="InParanoid" id="Q6AZ83"/>
<dbReference type="OMA" id="KKWCSRA"/>
<dbReference type="OrthoDB" id="6416209at2759"/>
<dbReference type="PhylomeDB" id="Q6AZ83"/>
<dbReference type="TreeFam" id="TF324388"/>
<dbReference type="Reactome" id="R-RNO-70263">
    <property type="pathway name" value="Gluconeogenesis"/>
</dbReference>
<dbReference type="UniPathway" id="UPA00138"/>
<dbReference type="PRO" id="PR:Q6AZ83"/>
<dbReference type="Proteomes" id="UP000002494">
    <property type="component" value="Chromosome 10"/>
</dbReference>
<dbReference type="Bgee" id="ENSRNOG00000020902">
    <property type="expression patterns" value="Expressed in testis and 20 other cell types or tissues"/>
</dbReference>
<dbReference type="GO" id="GO:0005783">
    <property type="term" value="C:endoplasmic reticulum"/>
    <property type="evidence" value="ECO:0000266"/>
    <property type="project" value="RGD"/>
</dbReference>
<dbReference type="GO" id="GO:0005789">
    <property type="term" value="C:endoplasmic reticulum membrane"/>
    <property type="evidence" value="ECO:0007669"/>
    <property type="project" value="UniProtKB-SubCell"/>
</dbReference>
<dbReference type="GO" id="GO:0016020">
    <property type="term" value="C:membrane"/>
    <property type="evidence" value="ECO:0000318"/>
    <property type="project" value="GO_Central"/>
</dbReference>
<dbReference type="GO" id="GO:0004346">
    <property type="term" value="F:glucose-6-phosphatase activity"/>
    <property type="evidence" value="ECO:0000314"/>
    <property type="project" value="RGD"/>
</dbReference>
<dbReference type="GO" id="GO:0006094">
    <property type="term" value="P:gluconeogenesis"/>
    <property type="evidence" value="ECO:0000314"/>
    <property type="project" value="RGD"/>
</dbReference>
<dbReference type="GO" id="GO:0051156">
    <property type="term" value="P:glucose 6-phosphate metabolic process"/>
    <property type="evidence" value="ECO:0000314"/>
    <property type="project" value="RGD"/>
</dbReference>
<dbReference type="GO" id="GO:0015760">
    <property type="term" value="P:glucose-6-phosphate transport"/>
    <property type="evidence" value="ECO:0000266"/>
    <property type="project" value="RGD"/>
</dbReference>
<dbReference type="CDD" id="cd03381">
    <property type="entry name" value="PAP2_glucose_6_phosphatase"/>
    <property type="match status" value="1"/>
</dbReference>
<dbReference type="FunFam" id="1.20.144.10:FF:000018">
    <property type="entry name" value="Glucose-6-phosphatase"/>
    <property type="match status" value="1"/>
</dbReference>
<dbReference type="Gene3D" id="1.20.144.10">
    <property type="entry name" value="Phosphatidic acid phosphatase type 2/haloperoxidase"/>
    <property type="match status" value="1"/>
</dbReference>
<dbReference type="InterPro" id="IPR016275">
    <property type="entry name" value="Glucose-6-phosphatase"/>
</dbReference>
<dbReference type="InterPro" id="IPR036938">
    <property type="entry name" value="P_Acid_Pase_2/haloperoxi_sf"/>
</dbReference>
<dbReference type="InterPro" id="IPR000326">
    <property type="entry name" value="P_Acid_Pase_2/haloperoxidase"/>
</dbReference>
<dbReference type="PANTHER" id="PTHR12591">
    <property type="entry name" value="GLUCOSE-6-PHOSPHATASE"/>
    <property type="match status" value="1"/>
</dbReference>
<dbReference type="PANTHER" id="PTHR12591:SF2">
    <property type="entry name" value="GLUCOSE-6-PHOSPHATASE 3"/>
    <property type="match status" value="1"/>
</dbReference>
<dbReference type="Pfam" id="PF01569">
    <property type="entry name" value="PAP2"/>
    <property type="match status" value="1"/>
</dbReference>
<dbReference type="PIRSF" id="PIRSF000905">
    <property type="entry name" value="Glucose-6-phosphatase"/>
    <property type="match status" value="1"/>
</dbReference>
<dbReference type="SMART" id="SM00014">
    <property type="entry name" value="acidPPc"/>
    <property type="match status" value="1"/>
</dbReference>
<dbReference type="SUPFAM" id="SSF48317">
    <property type="entry name" value="Acid phosphatase/Vanadium-dependent haloperoxidase"/>
    <property type="match status" value="1"/>
</dbReference>
<protein>
    <recommendedName>
        <fullName>Glucose-6-phosphatase 3</fullName>
        <shortName>G-6-Pase 3</shortName>
        <shortName>G6Pase 3</shortName>
        <ecNumber>3.1.3.9</ecNumber>
    </recommendedName>
</protein>
<accession>Q6AZ83</accession>
<accession>Q811R7</accession>